<feature type="signal peptide" evidence="3">
    <location>
        <begin position="1"/>
        <end position="24"/>
    </location>
</feature>
<feature type="chain" id="PRO_0000072069" description="Stage III sporulation protein AE">
    <location>
        <begin position="25"/>
        <end position="399"/>
    </location>
</feature>
<feature type="transmembrane region" description="Helical" evidence="1">
    <location>
        <begin position="104"/>
        <end position="124"/>
    </location>
</feature>
<feature type="transmembrane region" description="Helical" evidence="1">
    <location>
        <begin position="140"/>
        <end position="160"/>
    </location>
</feature>
<feature type="transmembrane region" description="Helical" evidence="1">
    <location>
        <begin position="172"/>
        <end position="192"/>
    </location>
</feature>
<feature type="transmembrane region" description="Helical" evidence="1">
    <location>
        <begin position="209"/>
        <end position="229"/>
    </location>
</feature>
<feature type="transmembrane region" description="Helical" evidence="1">
    <location>
        <begin position="248"/>
        <end position="268"/>
    </location>
</feature>
<feature type="transmembrane region" description="Helical" evidence="1">
    <location>
        <begin position="315"/>
        <end position="335"/>
    </location>
</feature>
<feature type="transmembrane region" description="Helical" evidence="1">
    <location>
        <begin position="368"/>
        <end position="388"/>
    </location>
</feature>
<feature type="mutagenesis site" description="7-fold reduction in sporulation efficiency (first SpoIVFB transmembrane region)." evidence="2">
    <original>MKRFQWVLLLAVLIIAGRAEIVQA</original>
    <variation>MNKWLDLILKIHVHPFLWIIAALGLLTGHMK</variation>
    <location>
        <begin position="1"/>
        <end position="24"/>
    </location>
</feature>
<feature type="mutagenesis site" description="200-fold reduction in sporulation efficiency." evidence="2">
    <location>
        <begin position="1"/>
        <end position="24"/>
    </location>
</feature>
<feature type="mutagenesis site" description="No change in sporulation efficiency (SleB signal sequence)." evidence="2">
    <original>RFQWVLLLAVLIIAGRAEIVQ</original>
    <variation>SKGSIMACLILFSFTITTFINTETIS</variation>
    <location>
        <begin position="3"/>
        <end position="23"/>
    </location>
</feature>
<feature type="mutagenesis site" description="10-fold reduction in sporulation efficiency. Sigma factor G (SigG) is not activated, signal sequence is not cleaved." evidence="2">
    <original>A</original>
    <variation>K</variation>
    <location>
        <position position="24"/>
    </location>
</feature>
<feature type="sequence conflict" description="In Ref. 2; BAA12564." evidence="3" ref="2">
    <original>E</original>
    <variation>G</variation>
    <location>
        <position position="29"/>
    </location>
</feature>
<feature type="sequence conflict" description="In Ref. 2; BAA12564." evidence="3" ref="2">
    <original>VIYIFAALAIVSLMFFLSLTVIITAGNLTMMM</original>
    <variation>GHLYFCSSRHCVSHVFFKPYCHNHSRKPHDDDEMKEAG</variation>
    <location>
        <begin position="367"/>
        <end position="398"/>
    </location>
</feature>
<comment type="function">
    <text evidence="2">Required during sporulation for activation of sigma factor SpoIIIG/SigG after engulfment is completed in the prespore. Overexpression in the absence of SpoIIIJ is synthetically lethal.</text>
</comment>
<comment type="subunit">
    <text evidence="2">Interacts with SpoIIIJ and YqjG.</text>
</comment>
<comment type="subcellular location">
    <subcellularLocation>
        <location evidence="2">Cell membrane</location>
        <topology evidence="2">Multi-pass membrane protein</topology>
    </subcellularLocation>
    <text>Signal sequence cleavage facilitates function; replacing the signal with the first transmembrane region of SpoIVFB decreases sporulation 7-fold, whereas replacing it with the SleB signal sequence does not affect sporulation.</text>
</comment>
<comment type="disruption phenotype">
    <text evidence="2">4000-fold reduction in sporulation efficiency.</text>
</comment>
<proteinExistence type="evidence at protein level"/>
<accession>P49782</accession>
<organism>
    <name type="scientific">Bacillus subtilis (strain 168)</name>
    <dbReference type="NCBI Taxonomy" id="224308"/>
    <lineage>
        <taxon>Bacteria</taxon>
        <taxon>Bacillati</taxon>
        <taxon>Bacillota</taxon>
        <taxon>Bacilli</taxon>
        <taxon>Bacillales</taxon>
        <taxon>Bacillaceae</taxon>
        <taxon>Bacillus</taxon>
    </lineage>
</organism>
<sequence>MKRFQWVLLLAVLIIAGRAEIVQAAGNAEQTEDHAETAEQLAERTAASLETDKIGEFWNDIMTEYGGLLPESQKGSLMEFINGDKSFSPQEWLKALFSYLFHEVLANGKLLGTLILLTIFCVILQLLQNAFQQSTVSKVAYSIVYMVLIILALNSFHVAINYATEAIQTMTSFILALIPLLLALLASSGGAVSAAFFHPVILFLMNTSGLLIQNIVMPLIFLSAILSIVSTMTEQYKVTQLANLLRNIAIGALAVFLTIFLGVISVQGASAAVTDGITLRTAKFITGNFIPVLGRMFTDATDTVISASLLLKNTVGILGVAILICIAAFPAIKVLSLAFIYKLAAAILQPLGGGPVITCLDVISKSVIYIFAALAIVSLMFFLSLTVIITAGNLTMMMK</sequence>
<reference key="1">
    <citation type="submission" date="1995-09" db="EMBL/GenBank/DDBJ databases">
        <authorList>
            <person name="Guerout-Fleury A.M."/>
            <person name="Gonzy-Treboul G."/>
            <person name="Stragier P."/>
        </authorList>
    </citation>
    <scope>NUCLEOTIDE SEQUENCE [GENOMIC DNA]</scope>
    <source>
        <strain>168 / JH642</strain>
    </source>
</reference>
<reference key="2">
    <citation type="journal article" date="1996" name="Microbiology">
        <title>Systematic sequencing of the 283 kb 210 degrees-232 degrees region of the Bacillus subtilis genome containing the skin element and many sporulation genes.</title>
        <authorList>
            <person name="Mizuno M."/>
            <person name="Masuda S."/>
            <person name="Takemaru K."/>
            <person name="Hosono S."/>
            <person name="Sato T."/>
            <person name="Takeuchi M."/>
            <person name="Kobayashi Y."/>
        </authorList>
    </citation>
    <scope>NUCLEOTIDE SEQUENCE [GENOMIC DNA]</scope>
    <source>
        <strain>168 / JH642</strain>
    </source>
</reference>
<reference key="3">
    <citation type="journal article" date="1997" name="Nature">
        <title>The complete genome sequence of the Gram-positive bacterium Bacillus subtilis.</title>
        <authorList>
            <person name="Kunst F."/>
            <person name="Ogasawara N."/>
            <person name="Moszer I."/>
            <person name="Albertini A.M."/>
            <person name="Alloni G."/>
            <person name="Azevedo V."/>
            <person name="Bertero M.G."/>
            <person name="Bessieres P."/>
            <person name="Bolotin A."/>
            <person name="Borchert S."/>
            <person name="Borriss R."/>
            <person name="Boursier L."/>
            <person name="Brans A."/>
            <person name="Braun M."/>
            <person name="Brignell S.C."/>
            <person name="Bron S."/>
            <person name="Brouillet S."/>
            <person name="Bruschi C.V."/>
            <person name="Caldwell B."/>
            <person name="Capuano V."/>
            <person name="Carter N.M."/>
            <person name="Choi S.-K."/>
            <person name="Codani J.-J."/>
            <person name="Connerton I.F."/>
            <person name="Cummings N.J."/>
            <person name="Daniel R.A."/>
            <person name="Denizot F."/>
            <person name="Devine K.M."/>
            <person name="Duesterhoeft A."/>
            <person name="Ehrlich S.D."/>
            <person name="Emmerson P.T."/>
            <person name="Entian K.-D."/>
            <person name="Errington J."/>
            <person name="Fabret C."/>
            <person name="Ferrari E."/>
            <person name="Foulger D."/>
            <person name="Fritz C."/>
            <person name="Fujita M."/>
            <person name="Fujita Y."/>
            <person name="Fuma S."/>
            <person name="Galizzi A."/>
            <person name="Galleron N."/>
            <person name="Ghim S.-Y."/>
            <person name="Glaser P."/>
            <person name="Goffeau A."/>
            <person name="Golightly E.J."/>
            <person name="Grandi G."/>
            <person name="Guiseppi G."/>
            <person name="Guy B.J."/>
            <person name="Haga K."/>
            <person name="Haiech J."/>
            <person name="Harwood C.R."/>
            <person name="Henaut A."/>
            <person name="Hilbert H."/>
            <person name="Holsappel S."/>
            <person name="Hosono S."/>
            <person name="Hullo M.-F."/>
            <person name="Itaya M."/>
            <person name="Jones L.-M."/>
            <person name="Joris B."/>
            <person name="Karamata D."/>
            <person name="Kasahara Y."/>
            <person name="Klaerr-Blanchard M."/>
            <person name="Klein C."/>
            <person name="Kobayashi Y."/>
            <person name="Koetter P."/>
            <person name="Koningstein G."/>
            <person name="Krogh S."/>
            <person name="Kumano M."/>
            <person name="Kurita K."/>
            <person name="Lapidus A."/>
            <person name="Lardinois S."/>
            <person name="Lauber J."/>
            <person name="Lazarevic V."/>
            <person name="Lee S.-M."/>
            <person name="Levine A."/>
            <person name="Liu H."/>
            <person name="Masuda S."/>
            <person name="Mauel C."/>
            <person name="Medigue C."/>
            <person name="Medina N."/>
            <person name="Mellado R.P."/>
            <person name="Mizuno M."/>
            <person name="Moestl D."/>
            <person name="Nakai S."/>
            <person name="Noback M."/>
            <person name="Noone D."/>
            <person name="O'Reilly M."/>
            <person name="Ogawa K."/>
            <person name="Ogiwara A."/>
            <person name="Oudega B."/>
            <person name="Park S.-H."/>
            <person name="Parro V."/>
            <person name="Pohl T.M."/>
            <person name="Portetelle D."/>
            <person name="Porwollik S."/>
            <person name="Prescott A.M."/>
            <person name="Presecan E."/>
            <person name="Pujic P."/>
            <person name="Purnelle B."/>
            <person name="Rapoport G."/>
            <person name="Rey M."/>
            <person name="Reynolds S."/>
            <person name="Rieger M."/>
            <person name="Rivolta C."/>
            <person name="Rocha E."/>
            <person name="Roche B."/>
            <person name="Rose M."/>
            <person name="Sadaie Y."/>
            <person name="Sato T."/>
            <person name="Scanlan E."/>
            <person name="Schleich S."/>
            <person name="Schroeter R."/>
            <person name="Scoffone F."/>
            <person name="Sekiguchi J."/>
            <person name="Sekowska A."/>
            <person name="Seror S.J."/>
            <person name="Serror P."/>
            <person name="Shin B.-S."/>
            <person name="Soldo B."/>
            <person name="Sorokin A."/>
            <person name="Tacconi E."/>
            <person name="Takagi T."/>
            <person name="Takahashi H."/>
            <person name="Takemaru K."/>
            <person name="Takeuchi M."/>
            <person name="Tamakoshi A."/>
            <person name="Tanaka T."/>
            <person name="Terpstra P."/>
            <person name="Tognoni A."/>
            <person name="Tosato V."/>
            <person name="Uchiyama S."/>
            <person name="Vandenbol M."/>
            <person name="Vannier F."/>
            <person name="Vassarotti A."/>
            <person name="Viari A."/>
            <person name="Wambutt R."/>
            <person name="Wedler E."/>
            <person name="Wedler H."/>
            <person name="Weitzenegger T."/>
            <person name="Winters P."/>
            <person name="Wipat A."/>
            <person name="Yamamoto H."/>
            <person name="Yamane K."/>
            <person name="Yasumoto K."/>
            <person name="Yata K."/>
            <person name="Yoshida K."/>
            <person name="Yoshikawa H.-F."/>
            <person name="Zumstein E."/>
            <person name="Yoshikawa H."/>
            <person name="Danchin A."/>
        </authorList>
    </citation>
    <scope>NUCLEOTIDE SEQUENCE [LARGE SCALE GENOMIC DNA]</scope>
    <source>
        <strain>168</strain>
    </source>
</reference>
<reference key="4">
    <citation type="journal article" date="2009" name="Microbiology">
        <title>From a consortium sequence to a unified sequence: the Bacillus subtilis 168 reference genome a decade later.</title>
        <authorList>
            <person name="Barbe V."/>
            <person name="Cruveiller S."/>
            <person name="Kunst F."/>
            <person name="Lenoble P."/>
            <person name="Meurice G."/>
            <person name="Sekowska A."/>
            <person name="Vallenet D."/>
            <person name="Wang T."/>
            <person name="Moszer I."/>
            <person name="Medigue C."/>
            <person name="Danchin A."/>
        </authorList>
    </citation>
    <scope>SEQUENCE REVISION TO 29 AND C-TERMINUS</scope>
</reference>
<reference key="5">
    <citation type="journal article" date="2008" name="J. Bacteriol.">
        <title>Processing of a membrane protein required for cell-to-cell signaling during endospore formation in Bacillus subtilis.</title>
        <authorList>
            <person name="Serrano M."/>
            <person name="Vieira F."/>
            <person name="Moran C.P. Jr."/>
            <person name="Henriques A.O."/>
        </authorList>
    </citation>
    <scope>FUNCTION IN SPORULATION</scope>
    <scope>INTERACTION WITH SPOIIIJ AND YQJG</scope>
    <scope>SUBCELLULAR LOCATION</scope>
    <scope>DISRUPTION PHENOTYPE</scope>
    <scope>MUTAGENESIS OF 1-MET--ALA-24; 3-ARG--GLN-23 AND ALA-24</scope>
    <source>
        <strain>168 / MB24</strain>
    </source>
</reference>
<name>SP3AE_BACSU</name>
<evidence type="ECO:0000255" key="1"/>
<evidence type="ECO:0000269" key="2">
    <source>
    </source>
</evidence>
<evidence type="ECO:0000305" key="3"/>
<dbReference type="EMBL" id="U35252">
    <property type="protein sequence ID" value="AAA76724.1"/>
    <property type="molecule type" value="Genomic_DNA"/>
</dbReference>
<dbReference type="EMBL" id="D84432">
    <property type="protein sequence ID" value="BAA12564.1"/>
    <property type="molecule type" value="Genomic_DNA"/>
</dbReference>
<dbReference type="EMBL" id="AL009126">
    <property type="protein sequence ID" value="CAB14370.2"/>
    <property type="molecule type" value="Genomic_DNA"/>
</dbReference>
<dbReference type="PIR" id="H69711">
    <property type="entry name" value="H69711"/>
</dbReference>
<dbReference type="RefSeq" id="NP_390319.2">
    <property type="nucleotide sequence ID" value="NC_000964.3"/>
</dbReference>
<dbReference type="RefSeq" id="WP_003230230.1">
    <property type="nucleotide sequence ID" value="NZ_OZ025638.1"/>
</dbReference>
<dbReference type="FunCoup" id="P49782">
    <property type="interactions" value="89"/>
</dbReference>
<dbReference type="IntAct" id="P49782">
    <property type="interactions" value="2"/>
</dbReference>
<dbReference type="STRING" id="224308.BSU24390"/>
<dbReference type="TCDB" id="9.B.70.1.1">
    <property type="family name" value="the multicomponent putative spoiiiae exporter (spoiiia-e) family"/>
</dbReference>
<dbReference type="PaxDb" id="224308-BSU24390"/>
<dbReference type="EnsemblBacteria" id="CAB14370">
    <property type="protein sequence ID" value="CAB14370"/>
    <property type="gene ID" value="BSU_24390"/>
</dbReference>
<dbReference type="GeneID" id="938569"/>
<dbReference type="KEGG" id="bsu:BSU24390"/>
<dbReference type="PATRIC" id="fig|224308.179.peg.2657"/>
<dbReference type="eggNOG" id="ENOG502Z7PW">
    <property type="taxonomic scope" value="Bacteria"/>
</dbReference>
<dbReference type="InParanoid" id="P49782"/>
<dbReference type="OrthoDB" id="2373222at2"/>
<dbReference type="PhylomeDB" id="P49782"/>
<dbReference type="BioCyc" id="BSUB:BSU24390-MONOMER"/>
<dbReference type="Proteomes" id="UP000001570">
    <property type="component" value="Chromosome"/>
</dbReference>
<dbReference type="GO" id="GO:0005886">
    <property type="term" value="C:plasma membrane"/>
    <property type="evidence" value="ECO:0007669"/>
    <property type="project" value="UniProtKB-SubCell"/>
</dbReference>
<dbReference type="GO" id="GO:0030435">
    <property type="term" value="P:sporulation resulting in formation of a cellular spore"/>
    <property type="evidence" value="ECO:0007669"/>
    <property type="project" value="UniProtKB-KW"/>
</dbReference>
<dbReference type="InterPro" id="IPR014194">
    <property type="entry name" value="Spore_III_AE"/>
</dbReference>
<dbReference type="NCBIfam" id="TIGR02829">
    <property type="entry name" value="spore_III_AE"/>
    <property type="match status" value="1"/>
</dbReference>
<dbReference type="Pfam" id="PF09546">
    <property type="entry name" value="Spore_III_AE"/>
    <property type="match status" value="1"/>
</dbReference>
<protein>
    <recommendedName>
        <fullName>Stage III sporulation protein AE</fullName>
    </recommendedName>
</protein>
<gene>
    <name type="primary">spoIIIAE</name>
    <name type="ordered locus">BSU24390</name>
</gene>
<keyword id="KW-1003">Cell membrane</keyword>
<keyword id="KW-0472">Membrane</keyword>
<keyword id="KW-1185">Reference proteome</keyword>
<keyword id="KW-0732">Signal</keyword>
<keyword id="KW-0749">Sporulation</keyword>
<keyword id="KW-0812">Transmembrane</keyword>
<keyword id="KW-1133">Transmembrane helix</keyword>